<accession>Q5KD76</accession>
<accession>Q55LP0</accession>
<protein>
    <recommendedName>
        <fullName evidence="1">Acireductone dioxygenase</fullName>
    </recommendedName>
    <alternativeName>
        <fullName evidence="1">Acireductone dioxygenase (Fe(2+)-requiring)</fullName>
        <shortName evidence="1">ARD'</shortName>
        <shortName evidence="1">Fe-ARD</shortName>
        <ecNumber evidence="1">1.13.11.54</ecNumber>
    </alternativeName>
    <alternativeName>
        <fullName evidence="1">Acireductone dioxygenase (Ni(2+)-requiring)</fullName>
        <shortName evidence="1">ARD</shortName>
        <shortName evidence="1">Ni-ARD</shortName>
        <ecNumber evidence="1">1.13.11.53</ecNumber>
    </alternativeName>
</protein>
<comment type="function">
    <text evidence="1">Catalyzes 2 different reactions between oxygen and the acireductone 1,2-dihydroxy-3-keto-5-methylthiopentene (DHK-MTPene) depending upon the metal bound in the active site. Fe-containing acireductone dioxygenase (Fe-ARD) produces formate and 2-keto-4-methylthiobutyrate (KMTB), the alpha-ketoacid precursor of methionine in the methionine recycle pathway. Ni-containing acireductone dioxygenase (Ni-ARD) produces methylthiopropionate, carbon monoxide and formate, and does not lie on the methionine recycle pathway.</text>
</comment>
<comment type="catalytic activity">
    <reaction evidence="1">
        <text>1,2-dihydroxy-5-(methylsulfanyl)pent-1-en-3-one + O2 = 4-methylsulfanyl-2-oxobutanoate + formate + 2 H(+)</text>
        <dbReference type="Rhea" id="RHEA:24504"/>
        <dbReference type="ChEBI" id="CHEBI:15378"/>
        <dbReference type="ChEBI" id="CHEBI:15379"/>
        <dbReference type="ChEBI" id="CHEBI:15740"/>
        <dbReference type="ChEBI" id="CHEBI:16723"/>
        <dbReference type="ChEBI" id="CHEBI:49252"/>
        <dbReference type="EC" id="1.13.11.54"/>
    </reaction>
</comment>
<comment type="catalytic activity">
    <reaction evidence="1">
        <text>1,2-dihydroxy-5-(methylsulfanyl)pent-1-en-3-one + O2 = 3-(methylsulfanyl)propanoate + CO + formate + 2 H(+)</text>
        <dbReference type="Rhea" id="RHEA:14161"/>
        <dbReference type="ChEBI" id="CHEBI:15378"/>
        <dbReference type="ChEBI" id="CHEBI:15379"/>
        <dbReference type="ChEBI" id="CHEBI:15740"/>
        <dbReference type="ChEBI" id="CHEBI:17245"/>
        <dbReference type="ChEBI" id="CHEBI:49016"/>
        <dbReference type="ChEBI" id="CHEBI:49252"/>
        <dbReference type="EC" id="1.13.11.53"/>
    </reaction>
</comment>
<comment type="cofactor">
    <cofactor evidence="1">
        <name>Fe(2+)</name>
        <dbReference type="ChEBI" id="CHEBI:29033"/>
    </cofactor>
    <cofactor evidence="1">
        <name>Ni(2+)</name>
        <dbReference type="ChEBI" id="CHEBI:49786"/>
    </cofactor>
    <text evidence="1">Binds either 1 Fe or Ni cation per monomer. Iron-binding promotes an acireductone dioxygenase reaction producing 2-keto-4-methylthiobutyrate, while nickel-binding promotes an acireductone dioxygenase reaction producing 3-(methylsulfanyl)propanoate.</text>
</comment>
<comment type="pathway">
    <text evidence="1">Amino-acid biosynthesis; L-methionine biosynthesis via salvage pathway; L-methionine from S-methyl-5-thio-alpha-D-ribose 1-phosphate: step 5/6.</text>
</comment>
<comment type="subcellular location">
    <subcellularLocation>
        <location evidence="1">Cytoplasm</location>
    </subcellularLocation>
    <subcellularLocation>
        <location evidence="1">Nucleus</location>
    </subcellularLocation>
</comment>
<comment type="similarity">
    <text evidence="1">Belongs to the acireductone dioxygenase (ARD) family.</text>
</comment>
<proteinExistence type="inferred from homology"/>
<sequence length="187" mass="21382">MKAYIYDDKPGDQRLPHDTGIDIPEPTLAKLGVVYQRIPIDSEGAWESKIDEFAKERGYKNRDRITVTREGLGEAYEEKIKSFFDEHLHEDEEIRYILAGSGYFDIRGAEGVHEEQWIRIALEAGDLIVLPAGIYHRFTVDSANTITAMRLFQDEPKWTPYSRKADGTDKLGSRDKYLETVRVGVTA</sequence>
<feature type="chain" id="PRO_0000414357" description="Acireductone dioxygenase">
    <location>
        <begin position="1"/>
        <end position="187"/>
    </location>
</feature>
<feature type="binding site" evidence="1">
    <location>
        <position position="87"/>
    </location>
    <ligand>
        <name>Fe(2+)</name>
        <dbReference type="ChEBI" id="CHEBI:29033"/>
        <note>for iron-dependent acireductone dioxygenase activity</note>
    </ligand>
</feature>
<feature type="binding site" evidence="1">
    <location>
        <position position="87"/>
    </location>
    <ligand>
        <name>Ni(2+)</name>
        <dbReference type="ChEBI" id="CHEBI:49786"/>
        <note>for nickel-dependent acireductone dioxygenase activity</note>
    </ligand>
</feature>
<feature type="binding site" evidence="1">
    <location>
        <position position="89"/>
    </location>
    <ligand>
        <name>Fe(2+)</name>
        <dbReference type="ChEBI" id="CHEBI:29033"/>
        <note>for iron-dependent acireductone dioxygenase activity</note>
    </ligand>
</feature>
<feature type="binding site" evidence="1">
    <location>
        <position position="89"/>
    </location>
    <ligand>
        <name>Ni(2+)</name>
        <dbReference type="ChEBI" id="CHEBI:49786"/>
        <note>for nickel-dependent acireductone dioxygenase activity</note>
    </ligand>
</feature>
<feature type="binding site" evidence="1">
    <location>
        <position position="93"/>
    </location>
    <ligand>
        <name>Fe(2+)</name>
        <dbReference type="ChEBI" id="CHEBI:29033"/>
        <note>for iron-dependent acireductone dioxygenase activity</note>
    </ligand>
</feature>
<feature type="binding site" evidence="1">
    <location>
        <position position="93"/>
    </location>
    <ligand>
        <name>Ni(2+)</name>
        <dbReference type="ChEBI" id="CHEBI:49786"/>
        <note>for nickel-dependent acireductone dioxygenase activity</note>
    </ligand>
</feature>
<feature type="binding site" evidence="1">
    <location>
        <position position="136"/>
    </location>
    <ligand>
        <name>Fe(2+)</name>
        <dbReference type="ChEBI" id="CHEBI:29033"/>
        <note>for iron-dependent acireductone dioxygenase activity</note>
    </ligand>
</feature>
<feature type="binding site" evidence="1">
    <location>
        <position position="136"/>
    </location>
    <ligand>
        <name>Ni(2+)</name>
        <dbReference type="ChEBI" id="CHEBI:49786"/>
        <note>for nickel-dependent acireductone dioxygenase activity</note>
    </ligand>
</feature>
<evidence type="ECO:0000255" key="1">
    <source>
        <dbReference type="HAMAP-Rule" id="MF_03154"/>
    </source>
</evidence>
<name>MTND_CRYNJ</name>
<organism>
    <name type="scientific">Cryptococcus neoformans var. neoformans serotype D (strain JEC21 / ATCC MYA-565)</name>
    <name type="common">Filobasidiella neoformans</name>
    <dbReference type="NCBI Taxonomy" id="214684"/>
    <lineage>
        <taxon>Eukaryota</taxon>
        <taxon>Fungi</taxon>
        <taxon>Dikarya</taxon>
        <taxon>Basidiomycota</taxon>
        <taxon>Agaricomycotina</taxon>
        <taxon>Tremellomycetes</taxon>
        <taxon>Tremellales</taxon>
        <taxon>Cryptococcaceae</taxon>
        <taxon>Cryptococcus</taxon>
        <taxon>Cryptococcus neoformans species complex</taxon>
    </lineage>
</organism>
<dbReference type="EC" id="1.13.11.54" evidence="1"/>
<dbReference type="EC" id="1.13.11.53" evidence="1"/>
<dbReference type="EMBL" id="AE017348">
    <property type="protein sequence ID" value="AAW45214.2"/>
    <property type="molecule type" value="Genomic_DNA"/>
</dbReference>
<dbReference type="RefSeq" id="XP_572521.1">
    <property type="nucleotide sequence ID" value="XM_572521.1"/>
</dbReference>
<dbReference type="SMR" id="Q5KD76"/>
<dbReference type="FunCoup" id="Q5KD76">
    <property type="interactions" value="75"/>
</dbReference>
<dbReference type="STRING" id="214684.Q5KD76"/>
<dbReference type="PaxDb" id="214684-Q5KD76"/>
<dbReference type="EnsemblFungi" id="AAW45214">
    <property type="protein sequence ID" value="AAW45214"/>
    <property type="gene ID" value="CNH03570"/>
</dbReference>
<dbReference type="GeneID" id="3259032"/>
<dbReference type="KEGG" id="cne:CNH03570"/>
<dbReference type="VEuPathDB" id="FungiDB:CNH03570"/>
<dbReference type="eggNOG" id="KOG2107">
    <property type="taxonomic scope" value="Eukaryota"/>
</dbReference>
<dbReference type="InParanoid" id="Q5KD76"/>
<dbReference type="OrthoDB" id="1867259at2759"/>
<dbReference type="UniPathway" id="UPA00904">
    <property type="reaction ID" value="UER00878"/>
</dbReference>
<dbReference type="Proteomes" id="UP000002149">
    <property type="component" value="Chromosome 8"/>
</dbReference>
<dbReference type="GO" id="GO:0005737">
    <property type="term" value="C:cytoplasm"/>
    <property type="evidence" value="ECO:0007669"/>
    <property type="project" value="UniProtKB-SubCell"/>
</dbReference>
<dbReference type="GO" id="GO:0005634">
    <property type="term" value="C:nucleus"/>
    <property type="evidence" value="ECO:0007669"/>
    <property type="project" value="UniProtKB-SubCell"/>
</dbReference>
<dbReference type="GO" id="GO:0010308">
    <property type="term" value="F:acireductone dioxygenase (Ni2+-requiring) activity"/>
    <property type="evidence" value="ECO:0007669"/>
    <property type="project" value="UniProtKB-UniRule"/>
</dbReference>
<dbReference type="GO" id="GO:0010309">
    <property type="term" value="F:acireductone dioxygenase [iron(II)-requiring] activity"/>
    <property type="evidence" value="ECO:0000318"/>
    <property type="project" value="GO_Central"/>
</dbReference>
<dbReference type="GO" id="GO:0005506">
    <property type="term" value="F:iron ion binding"/>
    <property type="evidence" value="ECO:0007669"/>
    <property type="project" value="UniProtKB-UniRule"/>
</dbReference>
<dbReference type="GO" id="GO:0016151">
    <property type="term" value="F:nickel cation binding"/>
    <property type="evidence" value="ECO:0007669"/>
    <property type="project" value="UniProtKB-UniRule"/>
</dbReference>
<dbReference type="GO" id="GO:0019509">
    <property type="term" value="P:L-methionine salvage from methylthioadenosine"/>
    <property type="evidence" value="ECO:0007669"/>
    <property type="project" value="UniProtKB-UniRule"/>
</dbReference>
<dbReference type="GO" id="GO:0006555">
    <property type="term" value="P:methionine metabolic process"/>
    <property type="evidence" value="ECO:0000318"/>
    <property type="project" value="GO_Central"/>
</dbReference>
<dbReference type="CDD" id="cd02232">
    <property type="entry name" value="cupin_ARD"/>
    <property type="match status" value="1"/>
</dbReference>
<dbReference type="FunFam" id="2.60.120.10:FF:000079">
    <property type="entry name" value="1,2-dihydroxy-3-keto-5-methylthiopentene dioxygenase"/>
    <property type="match status" value="1"/>
</dbReference>
<dbReference type="Gene3D" id="2.60.120.10">
    <property type="entry name" value="Jelly Rolls"/>
    <property type="match status" value="1"/>
</dbReference>
<dbReference type="HAMAP" id="MF_03154">
    <property type="entry name" value="Salvage_MtnD_euk"/>
    <property type="match status" value="1"/>
</dbReference>
<dbReference type="InterPro" id="IPR004313">
    <property type="entry name" value="ARD"/>
</dbReference>
<dbReference type="InterPro" id="IPR027496">
    <property type="entry name" value="ARD_euk"/>
</dbReference>
<dbReference type="InterPro" id="IPR014710">
    <property type="entry name" value="RmlC-like_jellyroll"/>
</dbReference>
<dbReference type="InterPro" id="IPR011051">
    <property type="entry name" value="RmlC_Cupin_sf"/>
</dbReference>
<dbReference type="PANTHER" id="PTHR23418">
    <property type="entry name" value="ACIREDUCTONE DIOXYGENASE"/>
    <property type="match status" value="1"/>
</dbReference>
<dbReference type="PANTHER" id="PTHR23418:SF0">
    <property type="entry name" value="ACIREDUCTONE DIOXYGENASE"/>
    <property type="match status" value="1"/>
</dbReference>
<dbReference type="Pfam" id="PF03079">
    <property type="entry name" value="ARD"/>
    <property type="match status" value="1"/>
</dbReference>
<dbReference type="SUPFAM" id="SSF51182">
    <property type="entry name" value="RmlC-like cupins"/>
    <property type="match status" value="1"/>
</dbReference>
<keyword id="KW-0028">Amino-acid biosynthesis</keyword>
<keyword id="KW-0963">Cytoplasm</keyword>
<keyword id="KW-0223">Dioxygenase</keyword>
<keyword id="KW-0408">Iron</keyword>
<keyword id="KW-0479">Metal-binding</keyword>
<keyword id="KW-0486">Methionine biosynthesis</keyword>
<keyword id="KW-0533">Nickel</keyword>
<keyword id="KW-0539">Nucleus</keyword>
<keyword id="KW-0560">Oxidoreductase</keyword>
<keyword id="KW-1185">Reference proteome</keyword>
<gene>
    <name evidence="1" type="primary">ADI1</name>
    <name type="ordered locus">CNH03570</name>
</gene>
<reference key="1">
    <citation type="journal article" date="2005" name="Science">
        <title>The genome of the basidiomycetous yeast and human pathogen Cryptococcus neoformans.</title>
        <authorList>
            <person name="Loftus B.J."/>
            <person name="Fung E."/>
            <person name="Roncaglia P."/>
            <person name="Rowley D."/>
            <person name="Amedeo P."/>
            <person name="Bruno D."/>
            <person name="Vamathevan J."/>
            <person name="Miranda M."/>
            <person name="Anderson I.J."/>
            <person name="Fraser J.A."/>
            <person name="Allen J.E."/>
            <person name="Bosdet I.E."/>
            <person name="Brent M.R."/>
            <person name="Chiu R."/>
            <person name="Doering T.L."/>
            <person name="Donlin M.J."/>
            <person name="D'Souza C.A."/>
            <person name="Fox D.S."/>
            <person name="Grinberg V."/>
            <person name="Fu J."/>
            <person name="Fukushima M."/>
            <person name="Haas B.J."/>
            <person name="Huang J.C."/>
            <person name="Janbon G."/>
            <person name="Jones S.J.M."/>
            <person name="Koo H.L."/>
            <person name="Krzywinski M.I."/>
            <person name="Kwon-Chung K.J."/>
            <person name="Lengeler K.B."/>
            <person name="Maiti R."/>
            <person name="Marra M.A."/>
            <person name="Marra R.E."/>
            <person name="Mathewson C.A."/>
            <person name="Mitchell T.G."/>
            <person name="Pertea M."/>
            <person name="Riggs F.R."/>
            <person name="Salzberg S.L."/>
            <person name="Schein J.E."/>
            <person name="Shvartsbeyn A."/>
            <person name="Shin H."/>
            <person name="Shumway M."/>
            <person name="Specht C.A."/>
            <person name="Suh B.B."/>
            <person name="Tenney A."/>
            <person name="Utterback T.R."/>
            <person name="Wickes B.L."/>
            <person name="Wortman J.R."/>
            <person name="Wye N.H."/>
            <person name="Kronstad J.W."/>
            <person name="Lodge J.K."/>
            <person name="Heitman J."/>
            <person name="Davis R.W."/>
            <person name="Fraser C.M."/>
            <person name="Hyman R.W."/>
        </authorList>
    </citation>
    <scope>NUCLEOTIDE SEQUENCE [LARGE SCALE GENOMIC DNA]</scope>
    <source>
        <strain>JEC21 / ATCC MYA-565</strain>
    </source>
</reference>